<name>RSMJ_ACTPJ</name>
<protein>
    <recommendedName>
        <fullName evidence="1">Ribosomal RNA small subunit methyltransferase J</fullName>
        <ecNumber evidence="1">2.1.1.242</ecNumber>
    </recommendedName>
    <alternativeName>
        <fullName evidence="1">16S rRNA m2G1516 methyltransferase</fullName>
    </alternativeName>
    <alternativeName>
        <fullName evidence="1">rRNA (guanine-N(2)-)-methyltransferase</fullName>
    </alternativeName>
</protein>
<reference key="1">
    <citation type="journal article" date="2008" name="PLoS ONE">
        <title>Genome biology of Actinobacillus pleuropneumoniae JL03, an isolate of serotype 3 prevalent in China.</title>
        <authorList>
            <person name="Xu Z."/>
            <person name="Zhou Y."/>
            <person name="Li L."/>
            <person name="Zhou R."/>
            <person name="Xiao S."/>
            <person name="Wan Y."/>
            <person name="Zhang S."/>
            <person name="Wang K."/>
            <person name="Li W."/>
            <person name="Li L."/>
            <person name="Jin H."/>
            <person name="Kang M."/>
            <person name="Dalai B."/>
            <person name="Li T."/>
            <person name="Liu L."/>
            <person name="Cheng Y."/>
            <person name="Zhang L."/>
            <person name="Xu T."/>
            <person name="Zheng H."/>
            <person name="Pu S."/>
            <person name="Wang B."/>
            <person name="Gu W."/>
            <person name="Zhang X.L."/>
            <person name="Zhu G.-F."/>
            <person name="Wang S."/>
            <person name="Zhao G.-P."/>
            <person name="Chen H."/>
        </authorList>
    </citation>
    <scope>NUCLEOTIDE SEQUENCE [LARGE SCALE GENOMIC DNA]</scope>
    <source>
        <strain>JL03</strain>
    </source>
</reference>
<gene>
    <name evidence="1" type="primary">rsmJ</name>
    <name type="ordered locus">APJL_1915</name>
</gene>
<comment type="function">
    <text evidence="1">Specifically methylates the guanosine in position 1516 of 16S rRNA.</text>
</comment>
<comment type="catalytic activity">
    <reaction evidence="1">
        <text>guanosine(1516) in 16S rRNA + S-adenosyl-L-methionine = N(2)-methylguanosine(1516) in 16S rRNA + S-adenosyl-L-homocysteine + H(+)</text>
        <dbReference type="Rhea" id="RHEA:43220"/>
        <dbReference type="Rhea" id="RHEA-COMP:10412"/>
        <dbReference type="Rhea" id="RHEA-COMP:10413"/>
        <dbReference type="ChEBI" id="CHEBI:15378"/>
        <dbReference type="ChEBI" id="CHEBI:57856"/>
        <dbReference type="ChEBI" id="CHEBI:59789"/>
        <dbReference type="ChEBI" id="CHEBI:74269"/>
        <dbReference type="ChEBI" id="CHEBI:74481"/>
        <dbReference type="EC" id="2.1.1.242"/>
    </reaction>
</comment>
<comment type="subcellular location">
    <subcellularLocation>
        <location evidence="1">Cytoplasm</location>
    </subcellularLocation>
</comment>
<comment type="similarity">
    <text evidence="1">Belongs to the methyltransferase superfamily. RsmJ family.</text>
</comment>
<feature type="chain" id="PRO_0000383371" description="Ribosomal RNA small subunit methyltransferase J">
    <location>
        <begin position="1"/>
        <end position="251"/>
    </location>
</feature>
<feature type="binding site" evidence="1">
    <location>
        <begin position="100"/>
        <end position="101"/>
    </location>
    <ligand>
        <name>S-adenosyl-L-methionine</name>
        <dbReference type="ChEBI" id="CHEBI:59789"/>
    </ligand>
</feature>
<feature type="binding site" evidence="1">
    <location>
        <begin position="116"/>
        <end position="117"/>
    </location>
    <ligand>
        <name>S-adenosyl-L-methionine</name>
        <dbReference type="ChEBI" id="CHEBI:59789"/>
    </ligand>
</feature>
<feature type="binding site" evidence="1">
    <location>
        <position position="170"/>
    </location>
    <ligand>
        <name>S-adenosyl-L-methionine</name>
        <dbReference type="ChEBI" id="CHEBI:59789"/>
    </ligand>
</feature>
<evidence type="ECO:0000255" key="1">
    <source>
        <dbReference type="HAMAP-Rule" id="MF_01523"/>
    </source>
</evidence>
<proteinExistence type="inferred from homology"/>
<organism>
    <name type="scientific">Actinobacillus pleuropneumoniae serotype 3 (strain JL03)</name>
    <dbReference type="NCBI Taxonomy" id="434271"/>
    <lineage>
        <taxon>Bacteria</taxon>
        <taxon>Pseudomonadati</taxon>
        <taxon>Pseudomonadota</taxon>
        <taxon>Gammaproteobacteria</taxon>
        <taxon>Pasteurellales</taxon>
        <taxon>Pasteurellaceae</taxon>
        <taxon>Actinobacillus</taxon>
    </lineage>
</organism>
<sequence length="251" mass="27929">MTIQLINESSNTEKFQQICDKWRLVHDRSAILALVLTDERLELRKLDEPKLGAIAVNFVDGTMAHRRKFGGGRGEAVAKAVGIKGDYLPTIIDATAGLGRDAFVLASVGCKVLLVERNPIVAALLEDGLVRAYADPEIGAFMQERMILADVRDISLLDVAQQAADVVYLDPMYPHKQKSALVKKEMRVFQHLVGADLDSDNFFVPAKALARKRVVVKRPDYAPFLAEQKPDFSQTTKNHRFDVYLSHLKSA</sequence>
<keyword id="KW-0963">Cytoplasm</keyword>
<keyword id="KW-0489">Methyltransferase</keyword>
<keyword id="KW-0698">rRNA processing</keyword>
<keyword id="KW-0949">S-adenosyl-L-methionine</keyword>
<keyword id="KW-0808">Transferase</keyword>
<accession>B0BTF1</accession>
<dbReference type="EC" id="2.1.1.242" evidence="1"/>
<dbReference type="EMBL" id="CP000687">
    <property type="protein sequence ID" value="ABY70465.1"/>
    <property type="molecule type" value="Genomic_DNA"/>
</dbReference>
<dbReference type="RefSeq" id="WP_012263430.1">
    <property type="nucleotide sequence ID" value="NC_010278.1"/>
</dbReference>
<dbReference type="SMR" id="B0BTF1"/>
<dbReference type="KEGG" id="apj:APJL_1915"/>
<dbReference type="HOGENOM" id="CLU_076324_0_0_6"/>
<dbReference type="Proteomes" id="UP000008547">
    <property type="component" value="Chromosome"/>
</dbReference>
<dbReference type="GO" id="GO:0005737">
    <property type="term" value="C:cytoplasm"/>
    <property type="evidence" value="ECO:0007669"/>
    <property type="project" value="UniProtKB-SubCell"/>
</dbReference>
<dbReference type="GO" id="GO:0008990">
    <property type="term" value="F:rRNA (guanine-N2-)-methyltransferase activity"/>
    <property type="evidence" value="ECO:0007669"/>
    <property type="project" value="UniProtKB-UniRule"/>
</dbReference>
<dbReference type="CDD" id="cd02440">
    <property type="entry name" value="AdoMet_MTases"/>
    <property type="match status" value="1"/>
</dbReference>
<dbReference type="Gene3D" id="3.40.50.150">
    <property type="entry name" value="Vaccinia Virus protein VP39"/>
    <property type="match status" value="1"/>
</dbReference>
<dbReference type="Gene3D" id="3.40.1630.10">
    <property type="entry name" value="YhiQ-like domain"/>
    <property type="match status" value="1"/>
</dbReference>
<dbReference type="HAMAP" id="MF_01523">
    <property type="entry name" value="16SrRNA_methyltr_J"/>
    <property type="match status" value="1"/>
</dbReference>
<dbReference type="InterPro" id="IPR007536">
    <property type="entry name" value="16SrRNA_methylTrfase_J"/>
</dbReference>
<dbReference type="InterPro" id="IPR029063">
    <property type="entry name" value="SAM-dependent_MTases_sf"/>
</dbReference>
<dbReference type="PANTHER" id="PTHR36112">
    <property type="entry name" value="RIBOSOMAL RNA SMALL SUBUNIT METHYLTRANSFERASE J"/>
    <property type="match status" value="1"/>
</dbReference>
<dbReference type="PANTHER" id="PTHR36112:SF1">
    <property type="entry name" value="RIBOSOMAL RNA SMALL SUBUNIT METHYLTRANSFERASE J"/>
    <property type="match status" value="1"/>
</dbReference>
<dbReference type="Pfam" id="PF04445">
    <property type="entry name" value="SAM_MT"/>
    <property type="match status" value="1"/>
</dbReference>
<dbReference type="SUPFAM" id="SSF53335">
    <property type="entry name" value="S-adenosyl-L-methionine-dependent methyltransferases"/>
    <property type="match status" value="1"/>
</dbReference>